<name>CWP23_SOLLC</name>
<protein>
    <recommendedName>
        <fullName>23 kDa cell wall protein</fullName>
    </recommendedName>
</protein>
<accession>P80819</accession>
<keyword id="KW-0134">Cell wall</keyword>
<keyword id="KW-0903">Direct protein sequencing</keyword>
<keyword id="KW-1185">Reference proteome</keyword>
<keyword id="KW-0964">Secreted</keyword>
<evidence type="ECO:0000269" key="1">
    <source>
    </source>
</evidence>
<evidence type="ECO:0000303" key="2">
    <source>
    </source>
</evidence>
<evidence type="ECO:0000305" key="3"/>
<feature type="chain" id="PRO_0000079700" description="23 kDa cell wall protein">
    <location>
        <begin position="1"/>
        <end position="14" status="greater than"/>
    </location>
</feature>
<feature type="non-terminal residue" evidence="2">
    <location>
        <position position="14"/>
    </location>
</feature>
<organism>
    <name type="scientific">Solanum lycopersicum</name>
    <name type="common">Tomato</name>
    <name type="synonym">Lycopersicon esculentum</name>
    <dbReference type="NCBI Taxonomy" id="4081"/>
    <lineage>
        <taxon>Eukaryota</taxon>
        <taxon>Viridiplantae</taxon>
        <taxon>Streptophyta</taxon>
        <taxon>Embryophyta</taxon>
        <taxon>Tracheophyta</taxon>
        <taxon>Spermatophyta</taxon>
        <taxon>Magnoliopsida</taxon>
        <taxon>eudicotyledons</taxon>
        <taxon>Gunneridae</taxon>
        <taxon>Pentapetalae</taxon>
        <taxon>asterids</taxon>
        <taxon>lamiids</taxon>
        <taxon>Solanales</taxon>
        <taxon>Solanaceae</taxon>
        <taxon>Solanoideae</taxon>
        <taxon>Solaneae</taxon>
        <taxon>Solanum</taxon>
        <taxon>Solanum subgen. Lycopersicon</taxon>
    </lineage>
</organism>
<proteinExistence type="evidence at protein level"/>
<sequence length="14" mass="1724">ALVEDPQMQKYHKH</sequence>
<comment type="subcellular location">
    <subcellularLocation>
        <location evidence="1">Secreted</location>
        <location evidence="1">Cell wall</location>
    </subcellularLocation>
</comment>
<dbReference type="InParanoid" id="P80819"/>
<dbReference type="Proteomes" id="UP000004994">
    <property type="component" value="Unplaced"/>
</dbReference>
<dbReference type="GO" id="GO:0005576">
    <property type="term" value="C:extracellular region"/>
    <property type="evidence" value="ECO:0007669"/>
    <property type="project" value="UniProtKB-KW"/>
</dbReference>
<reference evidence="3" key="1">
    <citation type="journal article" date="1997" name="J. Biol. Chem.">
        <title>Differential extraction and protein sequencing reveals major differences in patterns of primary cell wall proteins from plants.</title>
        <authorList>
            <person name="Robertson D."/>
            <person name="Mitchell G.P."/>
            <person name="Gilroy J.S."/>
            <person name="Gerrish C."/>
            <person name="Bolwell G.P."/>
            <person name="Slabas A.R."/>
        </authorList>
    </citation>
    <scope>PROTEIN SEQUENCE</scope>
    <scope>SUBCELLULAR LOCATION</scope>
</reference>